<comment type="function">
    <text evidence="2 4">Ca(2+) sensor specifically required for the Ca(2+)-dependent exocytosis of secretory vesicles containing IGF1 in neurons of the olfactory bulb. Exocytosis of IGF1 is required for sensory perception of smell. Not involved in Ca(2+)-dependent synaptic vesicle exocytosis (By similarity). Acts through Ca(2+) and phospholipid binding to the C2 domain: Ca(2+) induces binding of the C2-domains to phospholipid membranes and to assembled SNARE-complexes; both actions contribute to triggering exocytosis (By similarity).</text>
</comment>
<comment type="cofactor">
    <cofactor evidence="6">
        <name>Ca(2+)</name>
        <dbReference type="ChEBI" id="CHEBI:29108"/>
    </cofactor>
    <text evidence="1">Binds 3 Ca(2+) ions per subunit. The ions are bound to the C2 domains.</text>
</comment>
<comment type="subunit">
    <text evidence="4">Homodimer; disulfide-linked via the cysteine motif. Can also form heterodimers with SYT3, SYT6, SYT7 and SYT9.</text>
</comment>
<comment type="subcellular location">
    <subcellularLocation>
        <location evidence="4">Cytoplasmic vesicle</location>
        <location evidence="4">Secretory vesicle membrane</location>
        <topology evidence="5">Single-pass membrane protein</topology>
    </subcellularLocation>
    <text evidence="4">Localizes to neuronal vesicles containing IGF1 that are not enriched at synapses. Does not colocalize with synaptic vesicles or with the Golgi apparatus.</text>
</comment>
<comment type="domain">
    <text evidence="3">The cysteine motif mediates homo- or heterodimer formation via formation of disulfide bonds.</text>
</comment>
<comment type="domain">
    <text evidence="2">The first C2 domain mediates Ca(2+)-dependent phospholipid binding.</text>
</comment>
<comment type="similarity">
    <text evidence="7">Belongs to the synaptotagmin family.</text>
</comment>
<organism>
    <name type="scientific">Pongo abelii</name>
    <name type="common">Sumatran orangutan</name>
    <name type="synonym">Pongo pygmaeus abelii</name>
    <dbReference type="NCBI Taxonomy" id="9601"/>
    <lineage>
        <taxon>Eukaryota</taxon>
        <taxon>Metazoa</taxon>
        <taxon>Chordata</taxon>
        <taxon>Craniata</taxon>
        <taxon>Vertebrata</taxon>
        <taxon>Euteleostomi</taxon>
        <taxon>Mammalia</taxon>
        <taxon>Eutheria</taxon>
        <taxon>Euarchontoglires</taxon>
        <taxon>Primates</taxon>
        <taxon>Haplorrhini</taxon>
        <taxon>Catarrhini</taxon>
        <taxon>Hominidae</taxon>
        <taxon>Pongo</taxon>
    </lineage>
</organism>
<evidence type="ECO:0000250" key="1"/>
<evidence type="ECO:0000250" key="2">
    <source>
        <dbReference type="UniProtKB" id="O08625"/>
    </source>
</evidence>
<evidence type="ECO:0000250" key="3">
    <source>
        <dbReference type="UniProtKB" id="O35681"/>
    </source>
</evidence>
<evidence type="ECO:0000250" key="4">
    <source>
        <dbReference type="UniProtKB" id="Q9R0N4"/>
    </source>
</evidence>
<evidence type="ECO:0000255" key="5"/>
<evidence type="ECO:0000255" key="6">
    <source>
        <dbReference type="PROSITE-ProRule" id="PRU00041"/>
    </source>
</evidence>
<evidence type="ECO:0000305" key="7"/>
<proteinExistence type="evidence at transcript level"/>
<feature type="chain" id="PRO_0000183967" description="Synaptotagmin-10">
    <location>
        <begin position="1"/>
        <end position="523"/>
    </location>
</feature>
<feature type="topological domain" description="Vesicular" evidence="5">
    <location>
        <begin position="1"/>
        <end position="55"/>
    </location>
</feature>
<feature type="transmembrane region" description="Helical" evidence="5">
    <location>
        <begin position="56"/>
        <end position="76"/>
    </location>
</feature>
<feature type="topological domain" description="Cytoplasmic" evidence="5">
    <location>
        <begin position="77"/>
        <end position="523"/>
    </location>
</feature>
<feature type="domain" description="C2 1" evidence="6">
    <location>
        <begin position="231"/>
        <end position="352"/>
    </location>
</feature>
<feature type="domain" description="C2 2" evidence="6">
    <location>
        <begin position="363"/>
        <end position="496"/>
    </location>
</feature>
<feature type="region of interest" description="Cysteine motif" evidence="3">
    <location>
        <begin position="13"/>
        <end position="35"/>
    </location>
</feature>
<feature type="binding site" evidence="6">
    <location>
        <position position="262"/>
    </location>
    <ligand>
        <name>Ca(2+)</name>
        <dbReference type="ChEBI" id="CHEBI:29108"/>
        <label>1</label>
    </ligand>
</feature>
<feature type="binding site" evidence="6">
    <location>
        <position position="262"/>
    </location>
    <ligand>
        <name>Ca(2+)</name>
        <dbReference type="ChEBI" id="CHEBI:29108"/>
        <label>2</label>
    </ligand>
</feature>
<feature type="binding site" evidence="6">
    <location>
        <position position="268"/>
    </location>
    <ligand>
        <name>Ca(2+)</name>
        <dbReference type="ChEBI" id="CHEBI:29108"/>
        <label>1</label>
    </ligand>
</feature>
<feature type="binding site" evidence="6">
    <location>
        <position position="320"/>
    </location>
    <ligand>
        <name>Ca(2+)</name>
        <dbReference type="ChEBI" id="CHEBI:29108"/>
        <label>1</label>
    </ligand>
</feature>
<feature type="binding site" evidence="6">
    <location>
        <position position="320"/>
    </location>
    <ligand>
        <name>Ca(2+)</name>
        <dbReference type="ChEBI" id="CHEBI:29108"/>
        <label>2</label>
    </ligand>
</feature>
<feature type="binding site" evidence="6">
    <location>
        <position position="321"/>
    </location>
    <ligand>
        <name>Ca(2+)</name>
        <dbReference type="ChEBI" id="CHEBI:29108"/>
        <label>1</label>
    </ligand>
</feature>
<feature type="binding site" evidence="6">
    <location>
        <position position="322"/>
    </location>
    <ligand>
        <name>Ca(2+)</name>
        <dbReference type="ChEBI" id="CHEBI:29108"/>
        <label>1</label>
    </ligand>
</feature>
<feature type="binding site" evidence="6">
    <location>
        <position position="322"/>
    </location>
    <ligand>
        <name>Ca(2+)</name>
        <dbReference type="ChEBI" id="CHEBI:29108"/>
        <label>2</label>
    </ligand>
</feature>
<feature type="binding site" evidence="6">
    <location>
        <position position="322"/>
    </location>
    <ligand>
        <name>Ca(2+)</name>
        <dbReference type="ChEBI" id="CHEBI:29108"/>
        <label>3</label>
    </ligand>
</feature>
<feature type="binding site" evidence="6">
    <location>
        <position position="325"/>
    </location>
    <ligand>
        <name>Ca(2+)</name>
        <dbReference type="ChEBI" id="CHEBI:29108"/>
        <label>3</label>
    </ligand>
</feature>
<feature type="binding site" evidence="6">
    <location>
        <position position="328"/>
    </location>
    <ligand>
        <name>Ca(2+)</name>
        <dbReference type="ChEBI" id="CHEBI:29108"/>
        <label>2</label>
    </ligand>
</feature>
<feature type="binding site" evidence="6">
    <location>
        <position position="328"/>
    </location>
    <ligand>
        <name>Ca(2+)</name>
        <dbReference type="ChEBI" id="CHEBI:29108"/>
        <label>3</label>
    </ligand>
</feature>
<feature type="binding site" evidence="6">
    <location>
        <position position="394"/>
    </location>
    <ligand>
        <name>Ca(2+)</name>
        <dbReference type="ChEBI" id="CHEBI:29108"/>
        <label>4</label>
    </ligand>
</feature>
<feature type="binding site" evidence="6">
    <location>
        <position position="400"/>
    </location>
    <ligand>
        <name>Ca(2+)</name>
        <dbReference type="ChEBI" id="CHEBI:29108"/>
        <label>4</label>
    </ligand>
</feature>
<feature type="binding site" evidence="6">
    <location>
        <position position="454"/>
    </location>
    <ligand>
        <name>Ca(2+)</name>
        <dbReference type="ChEBI" id="CHEBI:29108"/>
        <label>4</label>
    </ligand>
</feature>
<feature type="binding site" evidence="6">
    <location>
        <position position="456"/>
    </location>
    <ligand>
        <name>Ca(2+)</name>
        <dbReference type="ChEBI" id="CHEBI:29108"/>
        <label>4</label>
    </ligand>
</feature>
<feature type="modified residue" description="Phosphothreonine" evidence="4">
    <location>
        <position position="136"/>
    </location>
</feature>
<name>SYT10_PONAB</name>
<gene>
    <name type="primary">SYT10</name>
</gene>
<protein>
    <recommendedName>
        <fullName>Synaptotagmin-10</fullName>
    </recommendedName>
    <alternativeName>
        <fullName>Synaptotagmin X</fullName>
        <shortName>SytX</shortName>
    </alternativeName>
</protein>
<sequence>MSFHKEDGVNSLCQKALHIVTELCFAGQVEWEKCSGIFPRDRGSQGGSSTDISVSLLAVVVSFCGLALLVVSLFVFWKLCWPCWKSKPVTSNITTLPQSISSAPTEVFETEEKKEIKENEKPAMKAIEPAIKISHTSPDIPAEVQTALKEHLIKHARVQRQITEPTSSSRHNSFRRHLPRQMQVSSVDFSMGTEPVLQRGETTTSIGRIKPELYKQKSVDSEGNQKEDVKICGKLNFTLQYDYENELLVVKIIKALDLPAKDFTGTSDPYVKMYLLPDRKKKFQTRVHRKTLNPLFDETFQFPVAYDQLSNRKLHFSVYDFDRFSRHDMIGEVILDNLFEVSDLSREATVWKDIHCATTESIDLGEIMFSLCYLPTAGRMTLTVIKCRNLKAMDITGSSDPYVKVSLMCEGRRLKKRKTTTKKNTLNPVYNEAIIFDIPPENVDQVSLSIAVMDYDRVGHNEVIGVCRTGLDAEGLGRDHWNEMLAYHRKPITHWHPLLELPGRATSFDSQGSCPSPKPPSTP</sequence>
<keyword id="KW-0106">Calcium</keyword>
<keyword id="KW-0968">Cytoplasmic vesicle</keyword>
<keyword id="KW-1015">Disulfide bond</keyword>
<keyword id="KW-0268">Exocytosis</keyword>
<keyword id="KW-0472">Membrane</keyword>
<keyword id="KW-0479">Metal-binding</keyword>
<keyword id="KW-0597">Phosphoprotein</keyword>
<keyword id="KW-1185">Reference proteome</keyword>
<keyword id="KW-0677">Repeat</keyword>
<keyword id="KW-0812">Transmembrane</keyword>
<keyword id="KW-1133">Transmembrane helix</keyword>
<reference key="1">
    <citation type="submission" date="2004-11" db="EMBL/GenBank/DDBJ databases">
        <authorList>
            <consortium name="The German cDNA consortium"/>
        </authorList>
    </citation>
    <scope>NUCLEOTIDE SEQUENCE [LARGE SCALE MRNA]</scope>
    <source>
        <tissue>Kidney</tissue>
    </source>
</reference>
<dbReference type="EMBL" id="CR858264">
    <property type="protein sequence ID" value="CAH90501.1"/>
    <property type="molecule type" value="mRNA"/>
</dbReference>
<dbReference type="RefSeq" id="NP_001125263.1">
    <property type="nucleotide sequence ID" value="NM_001131791.1"/>
</dbReference>
<dbReference type="SMR" id="Q5RCK6"/>
<dbReference type="FunCoup" id="Q5RCK6">
    <property type="interactions" value="61"/>
</dbReference>
<dbReference type="STRING" id="9601.ENSPPYP00000005031"/>
<dbReference type="Ensembl" id="ENSPPYT00000005229.2">
    <property type="protein sequence ID" value="ENSPPYP00000005031.2"/>
    <property type="gene ID" value="ENSPPYG00000004408.2"/>
</dbReference>
<dbReference type="GeneID" id="100172160"/>
<dbReference type="KEGG" id="pon:100172160"/>
<dbReference type="CTD" id="341359"/>
<dbReference type="eggNOG" id="KOG1028">
    <property type="taxonomic scope" value="Eukaryota"/>
</dbReference>
<dbReference type="GeneTree" id="ENSGT00940000158899"/>
<dbReference type="InParanoid" id="Q5RCK6"/>
<dbReference type="OMA" id="IWKDIHC"/>
<dbReference type="OrthoDB" id="67700at2759"/>
<dbReference type="Proteomes" id="UP000001595">
    <property type="component" value="Chromosome 12"/>
</dbReference>
<dbReference type="GO" id="GO:0070382">
    <property type="term" value="C:exocytic vesicle"/>
    <property type="evidence" value="ECO:0000250"/>
    <property type="project" value="UniProtKB"/>
</dbReference>
<dbReference type="GO" id="GO:0098978">
    <property type="term" value="C:glutamatergic synapse"/>
    <property type="evidence" value="ECO:0007669"/>
    <property type="project" value="Ensembl"/>
</dbReference>
<dbReference type="GO" id="GO:0005886">
    <property type="term" value="C:plasma membrane"/>
    <property type="evidence" value="ECO:0007669"/>
    <property type="project" value="TreeGrafter"/>
</dbReference>
<dbReference type="GO" id="GO:0098793">
    <property type="term" value="C:presynapse"/>
    <property type="evidence" value="ECO:0007669"/>
    <property type="project" value="Ensembl"/>
</dbReference>
<dbReference type="GO" id="GO:0030658">
    <property type="term" value="C:transport vesicle membrane"/>
    <property type="evidence" value="ECO:0007669"/>
    <property type="project" value="UniProtKB-SubCell"/>
</dbReference>
<dbReference type="GO" id="GO:0005509">
    <property type="term" value="F:calcium ion binding"/>
    <property type="evidence" value="ECO:0000250"/>
    <property type="project" value="UniProtKB"/>
</dbReference>
<dbReference type="GO" id="GO:0005544">
    <property type="term" value="F:calcium-dependent phospholipid binding"/>
    <property type="evidence" value="ECO:0007669"/>
    <property type="project" value="TreeGrafter"/>
</dbReference>
<dbReference type="GO" id="GO:0030276">
    <property type="term" value="F:clathrin binding"/>
    <property type="evidence" value="ECO:0007669"/>
    <property type="project" value="TreeGrafter"/>
</dbReference>
<dbReference type="GO" id="GO:0005546">
    <property type="term" value="F:phosphatidylinositol-4,5-bisphosphate binding"/>
    <property type="evidence" value="ECO:0007669"/>
    <property type="project" value="Ensembl"/>
</dbReference>
<dbReference type="GO" id="GO:0001786">
    <property type="term" value="F:phosphatidylserine binding"/>
    <property type="evidence" value="ECO:0007669"/>
    <property type="project" value="Ensembl"/>
</dbReference>
<dbReference type="GO" id="GO:0046982">
    <property type="term" value="F:protein heterodimerization activity"/>
    <property type="evidence" value="ECO:0007669"/>
    <property type="project" value="Ensembl"/>
</dbReference>
<dbReference type="GO" id="GO:0042803">
    <property type="term" value="F:protein homodimerization activity"/>
    <property type="evidence" value="ECO:0007669"/>
    <property type="project" value="Ensembl"/>
</dbReference>
<dbReference type="GO" id="GO:0000149">
    <property type="term" value="F:SNARE binding"/>
    <property type="evidence" value="ECO:0007669"/>
    <property type="project" value="Ensembl"/>
</dbReference>
<dbReference type="GO" id="GO:0017156">
    <property type="term" value="P:calcium-ion regulated exocytosis"/>
    <property type="evidence" value="ECO:0007669"/>
    <property type="project" value="TreeGrafter"/>
</dbReference>
<dbReference type="GO" id="GO:0007268">
    <property type="term" value="P:chemical synaptic transmission"/>
    <property type="evidence" value="ECO:0000250"/>
    <property type="project" value="UniProtKB"/>
</dbReference>
<dbReference type="GO" id="GO:0045956">
    <property type="term" value="P:positive regulation of calcium ion-dependent exocytosis"/>
    <property type="evidence" value="ECO:0000250"/>
    <property type="project" value="UniProtKB"/>
</dbReference>
<dbReference type="GO" id="GO:0007608">
    <property type="term" value="P:sensory perception of smell"/>
    <property type="evidence" value="ECO:0000250"/>
    <property type="project" value="UniProtKB"/>
</dbReference>
<dbReference type="CDD" id="cd08385">
    <property type="entry name" value="C2A_Synaptotagmin-1-5-6-9-10"/>
    <property type="match status" value="1"/>
</dbReference>
<dbReference type="CDD" id="cd08403">
    <property type="entry name" value="C2B_Synaptotagmin-3-5-6-9-10"/>
    <property type="match status" value="1"/>
</dbReference>
<dbReference type="FunFam" id="2.60.40.150:FF:000005">
    <property type="entry name" value="Synaptotagmin 6"/>
    <property type="match status" value="1"/>
</dbReference>
<dbReference type="FunFam" id="2.60.40.150:FF:000011">
    <property type="entry name" value="Synaptotagmin 6"/>
    <property type="match status" value="1"/>
</dbReference>
<dbReference type="Gene3D" id="2.60.40.150">
    <property type="entry name" value="C2 domain"/>
    <property type="match status" value="2"/>
</dbReference>
<dbReference type="InterPro" id="IPR000008">
    <property type="entry name" value="C2_dom"/>
</dbReference>
<dbReference type="InterPro" id="IPR035892">
    <property type="entry name" value="C2_domain_sf"/>
</dbReference>
<dbReference type="InterPro" id="IPR001565">
    <property type="entry name" value="Synaptotagmin"/>
</dbReference>
<dbReference type="PANTHER" id="PTHR10024">
    <property type="entry name" value="SYNAPTOTAGMIN"/>
    <property type="match status" value="1"/>
</dbReference>
<dbReference type="PANTHER" id="PTHR10024:SF46">
    <property type="entry name" value="SYNAPTOTAGMIN-10"/>
    <property type="match status" value="1"/>
</dbReference>
<dbReference type="Pfam" id="PF00168">
    <property type="entry name" value="C2"/>
    <property type="match status" value="2"/>
</dbReference>
<dbReference type="PRINTS" id="PR00360">
    <property type="entry name" value="C2DOMAIN"/>
</dbReference>
<dbReference type="PRINTS" id="PR00399">
    <property type="entry name" value="SYNAPTOTAGMN"/>
</dbReference>
<dbReference type="SMART" id="SM00239">
    <property type="entry name" value="C2"/>
    <property type="match status" value="2"/>
</dbReference>
<dbReference type="SUPFAM" id="SSF49562">
    <property type="entry name" value="C2 domain (Calcium/lipid-binding domain, CaLB)"/>
    <property type="match status" value="2"/>
</dbReference>
<dbReference type="PROSITE" id="PS50004">
    <property type="entry name" value="C2"/>
    <property type="match status" value="2"/>
</dbReference>
<accession>Q5RCK6</accession>